<sequence length="107" mass="11981">MMKVLVVVALLVTLISYSSSEGIDDLEADELLSLMANEQTRKECIPKHHECTSNKHGCCRGNFFKYKCQCTTVVTQDGEQTERCFCGTPPHHKAAELVVGFRKKIFG</sequence>
<dbReference type="EMBL" id="EU925949">
    <property type="protein sequence ID" value="ACI41281.1"/>
    <property type="molecule type" value="mRNA"/>
</dbReference>
<dbReference type="EMBL" id="FM863953">
    <property type="protein sequence ID" value="CAS03551.1"/>
    <property type="molecule type" value="mRNA"/>
</dbReference>
<dbReference type="SMR" id="B6DCL5"/>
<dbReference type="ArachnoServer" id="AS000898">
    <property type="toxin name" value="U1-lycotoxin-Ls1l"/>
</dbReference>
<dbReference type="GO" id="GO:0005576">
    <property type="term" value="C:extracellular region"/>
    <property type="evidence" value="ECO:0007669"/>
    <property type="project" value="UniProtKB-SubCell"/>
</dbReference>
<dbReference type="GO" id="GO:0090729">
    <property type="term" value="F:toxin activity"/>
    <property type="evidence" value="ECO:0007669"/>
    <property type="project" value="UniProtKB-KW"/>
</dbReference>
<dbReference type="InterPro" id="IPR019553">
    <property type="entry name" value="Spider_toxin_CSTX_knottin"/>
</dbReference>
<dbReference type="InterPro" id="IPR011142">
    <property type="entry name" value="Spider_toxin_CSTX_Knottin_CS"/>
</dbReference>
<dbReference type="Pfam" id="PF10530">
    <property type="entry name" value="Toxin_35"/>
    <property type="match status" value="1"/>
</dbReference>
<dbReference type="PROSITE" id="PS60029">
    <property type="entry name" value="SPIDER_CSTX"/>
    <property type="match status" value="1"/>
</dbReference>
<name>TX126_LYCSI</name>
<comment type="subcellular location">
    <subcellularLocation>
        <location evidence="1">Secreted</location>
    </subcellularLocation>
</comment>
<comment type="tissue specificity">
    <text>Expressed by the venom gland.</text>
</comment>
<comment type="domain">
    <text evidence="1">The presence of a 'disulfide through disulfide knot' structurally defines this protein as a knottin.</text>
</comment>
<comment type="similarity">
    <text evidence="3">Belongs to the neurotoxin 19 (CSTX) family. 04 (U1-Lctx) subfamily.</text>
</comment>
<organism>
    <name type="scientific">Lycosa singoriensis</name>
    <name type="common">Wolf spider</name>
    <name type="synonym">Aranea singoriensis</name>
    <dbReference type="NCBI Taxonomy" id="434756"/>
    <lineage>
        <taxon>Eukaryota</taxon>
        <taxon>Metazoa</taxon>
        <taxon>Ecdysozoa</taxon>
        <taxon>Arthropoda</taxon>
        <taxon>Chelicerata</taxon>
        <taxon>Arachnida</taxon>
        <taxon>Araneae</taxon>
        <taxon>Araneomorphae</taxon>
        <taxon>Entelegynae</taxon>
        <taxon>Lycosoidea</taxon>
        <taxon>Lycosidae</taxon>
        <taxon>Lycosa</taxon>
    </lineage>
</organism>
<accession>B6DCL5</accession>
<protein>
    <recommendedName>
        <fullName>U1-lycotoxin-Ls1l</fullName>
    </recommendedName>
    <alternativeName>
        <fullName>Toxin-like structure LSTX-A26</fullName>
    </alternativeName>
</protein>
<keyword id="KW-1015">Disulfide bond</keyword>
<keyword id="KW-0960">Knottin</keyword>
<keyword id="KW-0964">Secreted</keyword>
<keyword id="KW-0732">Signal</keyword>
<keyword id="KW-0800">Toxin</keyword>
<feature type="signal peptide" evidence="2">
    <location>
        <begin position="1"/>
        <end position="20"/>
    </location>
</feature>
<feature type="propeptide" id="PRO_0000401547" evidence="1">
    <location>
        <begin position="21"/>
        <end position="41"/>
    </location>
</feature>
<feature type="chain" id="PRO_0000401548" description="U1-lycotoxin-Ls1l">
    <location>
        <begin position="42"/>
        <end position="107"/>
    </location>
</feature>
<feature type="disulfide bond" evidence="1">
    <location>
        <begin position="44"/>
        <end position="59"/>
    </location>
</feature>
<feature type="disulfide bond" evidence="1">
    <location>
        <begin position="51"/>
        <end position="68"/>
    </location>
</feature>
<feature type="disulfide bond" evidence="1">
    <location>
        <begin position="58"/>
        <end position="86"/>
    </location>
</feature>
<feature type="disulfide bond" evidence="1">
    <location>
        <begin position="70"/>
        <end position="84"/>
    </location>
</feature>
<evidence type="ECO:0000250" key="1"/>
<evidence type="ECO:0000255" key="2"/>
<evidence type="ECO:0000305" key="3"/>
<proteinExistence type="evidence at transcript level"/>
<reference key="1">
    <citation type="journal article" date="2010" name="Zoology">
        <title>Transcriptome analysis of the venom glands of the Chinese wolf spider Lycosa singoriensis.</title>
        <authorList>
            <person name="Zhang Y."/>
            <person name="Chen J."/>
            <person name="Tang X."/>
            <person name="Wang F."/>
            <person name="Jiang L."/>
            <person name="Xiong X."/>
            <person name="Wang M."/>
            <person name="Rong M."/>
            <person name="Liu Z."/>
            <person name="Liang S."/>
        </authorList>
    </citation>
    <scope>NUCLEOTIDE SEQUENCE [LARGE SCALE MRNA]</scope>
    <source>
        <tissue>Venom gland</tissue>
    </source>
</reference>